<accession>P97464</accession>
<accession>Q61546</accession>
<keyword id="KW-1015">Disulfide bond</keyword>
<keyword id="KW-0256">Endoplasmic reticulum</keyword>
<keyword id="KW-0325">Glycoprotein</keyword>
<keyword id="KW-0328">Glycosyltransferase</keyword>
<keyword id="KW-0333">Golgi apparatus</keyword>
<keyword id="KW-0464">Manganese</keyword>
<keyword id="KW-0472">Membrane</keyword>
<keyword id="KW-0479">Metal-binding</keyword>
<keyword id="KW-1185">Reference proteome</keyword>
<keyword id="KW-0735">Signal-anchor</keyword>
<keyword id="KW-0808">Transferase</keyword>
<keyword id="KW-0812">Transmembrane</keyword>
<keyword id="KW-1133">Transmembrane helix</keyword>
<sequence length="746" mass="86308">MQAKKRYFILLSAGSCLALLFYFGGVQFRASRSHSRREEHSGRNGLHQPSPDHFWPRFPDALRPFFPWDQLENEDSSVHISPRQKRDANSSIYKGKKCRMESCFDFTLCKKNGFKVYVYPQQKGEKIAESYQNILAAIEGSRFYTSDPSQACLFVLSLDTLDRDQLSPQYVHNLRSKVQSLHLWNNGRNHLIFNLYSGTWPDYTEDVGFDIGQAMLAKASISTENFRPNFDVSIPLFSKDHPRTGGERGFLKFNTIPPLRKYMLVFKGKRYLTGIGSDTRNALYHVHNGEDVLLLTTCKHGKDWQKHKDSRCDRDNTEYEKYDYREMLHNATFCLVPRGRRLGSFRFLEALQAACVPVMLSNGWELPFSEVINWNQAAVIGDERLLLQIPSTIRSIHQDKILALRQQTQFLWEAYFSSVEKIVLTTLEIIQDRIFKHISRNSLIWNKHPGGLFVLPQYSSYLGDFPYYYANLGLKPPSKFTAVIHAVTPLVSQSQPVLKLLVAAAKSQYCAQIIVLWNCDKPLPAKHRWPATAVPVIVIEGESKVMSSRFLPYDNIITDAVLSLDEDTVLSTTEVDFAFTVWQSFPERIVGYPARSHFWDNSKERWGYTSKWTNDYSMVLTGAAIYHKYYHYLYSHYLPASLKNMVDQLANCEDILMNFLVSAVTKLPPIKVTQKKQYKETMMGQTSRASRWADPDHFAQRQSCMNTFASWFGYMPLIHSQMRLDPVLFKDQVSILRKKYRDIERL</sequence>
<dbReference type="EC" id="2.4.1.225" evidence="1"/>
<dbReference type="EMBL" id="U78539">
    <property type="protein sequence ID" value="AAB41728.1"/>
    <property type="molecule type" value="mRNA"/>
</dbReference>
<dbReference type="EMBL" id="X96639">
    <property type="protein sequence ID" value="CAA65443.1"/>
    <property type="molecule type" value="mRNA"/>
</dbReference>
<dbReference type="EMBL" id="BC004741">
    <property type="protein sequence ID" value="AAH04741.1"/>
    <property type="molecule type" value="mRNA"/>
</dbReference>
<dbReference type="CCDS" id="CCDS27466.1"/>
<dbReference type="RefSeq" id="NP_034292.2">
    <property type="nucleotide sequence ID" value="NM_010162.2"/>
</dbReference>
<dbReference type="SMR" id="P97464"/>
<dbReference type="BioGRID" id="199556">
    <property type="interactions" value="5"/>
</dbReference>
<dbReference type="FunCoup" id="P97464">
    <property type="interactions" value="1734"/>
</dbReference>
<dbReference type="STRING" id="10090.ENSMUSP00000076505"/>
<dbReference type="CAZy" id="GT47">
    <property type="family name" value="Glycosyltransferase Family 47"/>
</dbReference>
<dbReference type="CAZy" id="GT64">
    <property type="family name" value="Glycosyltransferase Family 64"/>
</dbReference>
<dbReference type="GlyCosmos" id="P97464">
    <property type="glycosylation" value="2 sites, No reported glycans"/>
</dbReference>
<dbReference type="GlyGen" id="P97464">
    <property type="glycosylation" value="2 sites, 1 N-linked glycan (1 site)"/>
</dbReference>
<dbReference type="iPTMnet" id="P97464"/>
<dbReference type="PhosphoSitePlus" id="P97464"/>
<dbReference type="CPTAC" id="non-CPTAC-3915"/>
<dbReference type="PaxDb" id="10090-ENSMUSP00000076505"/>
<dbReference type="PeptideAtlas" id="P97464"/>
<dbReference type="ProteomicsDB" id="275805"/>
<dbReference type="Pumba" id="P97464"/>
<dbReference type="Antibodypedia" id="26732">
    <property type="antibodies" value="236 antibodies from 30 providers"/>
</dbReference>
<dbReference type="DNASU" id="14042"/>
<dbReference type="Ensembl" id="ENSMUST00000077273.9">
    <property type="protein sequence ID" value="ENSMUSP00000076505.3"/>
    <property type="gene ID" value="ENSMUSG00000061731.10"/>
</dbReference>
<dbReference type="GeneID" id="14042"/>
<dbReference type="KEGG" id="mmu:14042"/>
<dbReference type="UCSC" id="uc007vrh.2">
    <property type="organism name" value="mouse"/>
</dbReference>
<dbReference type="AGR" id="MGI:894663"/>
<dbReference type="CTD" id="2131"/>
<dbReference type="MGI" id="MGI:894663">
    <property type="gene designation" value="Ext1"/>
</dbReference>
<dbReference type="VEuPathDB" id="HostDB:ENSMUSG00000061731"/>
<dbReference type="eggNOG" id="KOG1021">
    <property type="taxonomic scope" value="Eukaryota"/>
</dbReference>
<dbReference type="GeneTree" id="ENSGT00940000155321"/>
<dbReference type="HOGENOM" id="CLU_013906_4_0_1"/>
<dbReference type="InParanoid" id="P97464"/>
<dbReference type="OMA" id="CRHGKAW"/>
<dbReference type="OrthoDB" id="5954868at2759"/>
<dbReference type="PhylomeDB" id="P97464"/>
<dbReference type="TreeFam" id="TF314231"/>
<dbReference type="BRENDA" id="2.4.1.224">
    <property type="organism ID" value="3474"/>
</dbReference>
<dbReference type="BRENDA" id="2.4.1.225">
    <property type="organism ID" value="3474"/>
</dbReference>
<dbReference type="Reactome" id="R-MMU-2022928">
    <property type="pathway name" value="HS-GAG biosynthesis"/>
</dbReference>
<dbReference type="UniPathway" id="UPA00378"/>
<dbReference type="BioGRID-ORCS" id="14042">
    <property type="hits" value="6 hits in 80 CRISPR screens"/>
</dbReference>
<dbReference type="ChiTaRS" id="Ext1">
    <property type="organism name" value="mouse"/>
</dbReference>
<dbReference type="PRO" id="PR:P97464"/>
<dbReference type="Proteomes" id="UP000000589">
    <property type="component" value="Chromosome 15"/>
</dbReference>
<dbReference type="RNAct" id="P97464">
    <property type="molecule type" value="protein"/>
</dbReference>
<dbReference type="Bgee" id="ENSMUSG00000061731">
    <property type="expression patterns" value="Expressed in embryonic post-anal tail and 293 other cell types or tissues"/>
</dbReference>
<dbReference type="ExpressionAtlas" id="P97464">
    <property type="expression patterns" value="baseline and differential"/>
</dbReference>
<dbReference type="GO" id="GO:1902494">
    <property type="term" value="C:catalytic complex"/>
    <property type="evidence" value="ECO:0000250"/>
    <property type="project" value="UniProtKB"/>
</dbReference>
<dbReference type="GO" id="GO:0005789">
    <property type="term" value="C:endoplasmic reticulum membrane"/>
    <property type="evidence" value="ECO:0000314"/>
    <property type="project" value="UniProtKB"/>
</dbReference>
<dbReference type="GO" id="GO:0005794">
    <property type="term" value="C:Golgi apparatus"/>
    <property type="evidence" value="ECO:0000314"/>
    <property type="project" value="MGI"/>
</dbReference>
<dbReference type="GO" id="GO:0000139">
    <property type="term" value="C:Golgi membrane"/>
    <property type="evidence" value="ECO:0007669"/>
    <property type="project" value="UniProtKB-SubCell"/>
</dbReference>
<dbReference type="GO" id="GO:0045202">
    <property type="term" value="C:synapse"/>
    <property type="evidence" value="ECO:0007669"/>
    <property type="project" value="GOC"/>
</dbReference>
<dbReference type="GO" id="GO:0050508">
    <property type="term" value="F:glucuronosyl-N-acetylglucosaminyl-proteoglycan 4-alpha-N-acetylglucosaminyltransferase activity"/>
    <property type="evidence" value="ECO:0000314"/>
    <property type="project" value="UniProtKB"/>
</dbReference>
<dbReference type="GO" id="GO:0016757">
    <property type="term" value="F:glycosyltransferase activity"/>
    <property type="evidence" value="ECO:0000315"/>
    <property type="project" value="MGI"/>
</dbReference>
<dbReference type="GO" id="GO:0046872">
    <property type="term" value="F:metal ion binding"/>
    <property type="evidence" value="ECO:0007669"/>
    <property type="project" value="UniProtKB-KW"/>
</dbReference>
<dbReference type="GO" id="GO:0050509">
    <property type="term" value="F:N-acetylglucosaminyl-proteoglycan 4-beta-glucuronosyltransferase activity"/>
    <property type="evidence" value="ECO:0000314"/>
    <property type="project" value="UniProtKB"/>
</dbReference>
<dbReference type="GO" id="GO:0046982">
    <property type="term" value="F:protein heterodimerization activity"/>
    <property type="evidence" value="ECO:0007669"/>
    <property type="project" value="Ensembl"/>
</dbReference>
<dbReference type="GO" id="GO:0042803">
    <property type="term" value="F:protein homodimerization activity"/>
    <property type="evidence" value="ECO:0007669"/>
    <property type="project" value="Ensembl"/>
</dbReference>
<dbReference type="GO" id="GO:0019882">
    <property type="term" value="P:antigen processing and presentation"/>
    <property type="evidence" value="ECO:0000315"/>
    <property type="project" value="MGI"/>
</dbReference>
<dbReference type="GO" id="GO:0007411">
    <property type="term" value="P:axon guidance"/>
    <property type="evidence" value="ECO:0000315"/>
    <property type="project" value="MGI"/>
</dbReference>
<dbReference type="GO" id="GO:0071711">
    <property type="term" value="P:basement membrane organization"/>
    <property type="evidence" value="ECO:0000315"/>
    <property type="project" value="MGI"/>
</dbReference>
<dbReference type="GO" id="GO:0001974">
    <property type="term" value="P:blood vessel remodeling"/>
    <property type="evidence" value="ECO:0000315"/>
    <property type="project" value="MGI"/>
</dbReference>
<dbReference type="GO" id="GO:0030509">
    <property type="term" value="P:BMP signaling pathway"/>
    <property type="evidence" value="ECO:0000314"/>
    <property type="project" value="MGI"/>
</dbReference>
<dbReference type="GO" id="GO:0098868">
    <property type="term" value="P:bone growth"/>
    <property type="evidence" value="ECO:0000315"/>
    <property type="project" value="MGI"/>
</dbReference>
<dbReference type="GO" id="GO:0060349">
    <property type="term" value="P:bone morphogenesis"/>
    <property type="evidence" value="ECO:0000315"/>
    <property type="project" value="MGI"/>
</dbReference>
<dbReference type="GO" id="GO:0045453">
    <property type="term" value="P:bone resorption"/>
    <property type="evidence" value="ECO:0000315"/>
    <property type="project" value="MGI"/>
</dbReference>
<dbReference type="GO" id="GO:0007420">
    <property type="term" value="P:brain development"/>
    <property type="evidence" value="ECO:0000315"/>
    <property type="project" value="MGI"/>
</dbReference>
<dbReference type="GO" id="GO:0060070">
    <property type="term" value="P:canonical Wnt signaling pathway"/>
    <property type="evidence" value="ECO:0000315"/>
    <property type="project" value="MGI"/>
</dbReference>
<dbReference type="GO" id="GO:0060351">
    <property type="term" value="P:cartilage development involved in endochondral bone morphogenesis"/>
    <property type="evidence" value="ECO:0000315"/>
    <property type="project" value="MGI"/>
</dbReference>
<dbReference type="GO" id="GO:0007155">
    <property type="term" value="P:cell adhesion"/>
    <property type="evidence" value="ECO:0000315"/>
    <property type="project" value="MGI"/>
</dbReference>
<dbReference type="GO" id="GO:0033627">
    <property type="term" value="P:cell adhesion mediated by integrin"/>
    <property type="evidence" value="ECO:0000315"/>
    <property type="project" value="MGI"/>
</dbReference>
<dbReference type="GO" id="GO:0045165">
    <property type="term" value="P:cell fate commitment"/>
    <property type="evidence" value="ECO:0000315"/>
    <property type="project" value="MGI"/>
</dbReference>
<dbReference type="GO" id="GO:0000902">
    <property type="term" value="P:cell morphogenesis"/>
    <property type="evidence" value="ECO:0000315"/>
    <property type="project" value="MGI"/>
</dbReference>
<dbReference type="GO" id="GO:0008283">
    <property type="term" value="P:cell population proliferation"/>
    <property type="evidence" value="ECO:0000315"/>
    <property type="project" value="MGI"/>
</dbReference>
<dbReference type="GO" id="GO:0007166">
    <property type="term" value="P:cell surface receptor signaling pathway"/>
    <property type="evidence" value="ECO:0000315"/>
    <property type="project" value="MGI"/>
</dbReference>
<dbReference type="GO" id="GO:0071773">
    <property type="term" value="P:cellular response to BMP stimulus"/>
    <property type="evidence" value="ECO:0000315"/>
    <property type="project" value="MGI"/>
</dbReference>
<dbReference type="GO" id="GO:0044344">
    <property type="term" value="P:cellular response to fibroblast growth factor stimulus"/>
    <property type="evidence" value="ECO:0000315"/>
    <property type="project" value="MGI"/>
</dbReference>
<dbReference type="GO" id="GO:0098586">
    <property type="term" value="P:cellular response to virus"/>
    <property type="evidence" value="ECO:0000315"/>
    <property type="project" value="MGI"/>
</dbReference>
<dbReference type="GO" id="GO:0002062">
    <property type="term" value="P:chondrocyte differentiation"/>
    <property type="evidence" value="ECO:0000315"/>
    <property type="project" value="MGI"/>
</dbReference>
<dbReference type="GO" id="GO:0003415">
    <property type="term" value="P:chondrocyte hypertrophy"/>
    <property type="evidence" value="ECO:0000315"/>
    <property type="project" value="MGI"/>
</dbReference>
<dbReference type="GO" id="GO:0035988">
    <property type="term" value="P:chondrocyte proliferation"/>
    <property type="evidence" value="ECO:0000315"/>
    <property type="project" value="MGI"/>
</dbReference>
<dbReference type="GO" id="GO:0050654">
    <property type="term" value="P:chondroitin sulfate proteoglycan metabolic process"/>
    <property type="evidence" value="ECO:0000315"/>
    <property type="project" value="MGI"/>
</dbReference>
<dbReference type="GO" id="GO:0030199">
    <property type="term" value="P:collagen fibril organization"/>
    <property type="evidence" value="ECO:0000315"/>
    <property type="project" value="MGI"/>
</dbReference>
<dbReference type="GO" id="GO:1904888">
    <property type="term" value="P:cranial skeletal system development"/>
    <property type="evidence" value="ECO:0000315"/>
    <property type="project" value="MGI"/>
</dbReference>
<dbReference type="GO" id="GO:0070593">
    <property type="term" value="P:dendrite self-avoidance"/>
    <property type="evidence" value="ECO:0000315"/>
    <property type="project" value="MGI"/>
</dbReference>
<dbReference type="GO" id="GO:0036336">
    <property type="term" value="P:dendritic cell migration"/>
    <property type="evidence" value="ECO:0000315"/>
    <property type="project" value="MGI"/>
</dbReference>
<dbReference type="GO" id="GO:0060560">
    <property type="term" value="P:developmental growth involved in morphogenesis"/>
    <property type="evidence" value="ECO:0000315"/>
    <property type="project" value="MGI"/>
</dbReference>
<dbReference type="GO" id="GO:0048598">
    <property type="term" value="P:embryonic morphogenesis"/>
    <property type="evidence" value="ECO:0000315"/>
    <property type="project" value="MGI"/>
</dbReference>
<dbReference type="GO" id="GO:0072498">
    <property type="term" value="P:embryonic skeletal joint development"/>
    <property type="evidence" value="ECO:0000315"/>
    <property type="project" value="MGI"/>
</dbReference>
<dbReference type="GO" id="GO:0003416">
    <property type="term" value="P:endochondral bone growth"/>
    <property type="evidence" value="ECO:0000315"/>
    <property type="project" value="MGI"/>
</dbReference>
<dbReference type="GO" id="GO:0060350">
    <property type="term" value="P:endochondral bone morphogenesis"/>
    <property type="evidence" value="ECO:0000315"/>
    <property type="project" value="MGI"/>
</dbReference>
<dbReference type="GO" id="GO:0001958">
    <property type="term" value="P:endochondral ossification"/>
    <property type="evidence" value="ECO:0000315"/>
    <property type="project" value="MGI"/>
</dbReference>
<dbReference type="GO" id="GO:0007492">
    <property type="term" value="P:endoderm development"/>
    <property type="evidence" value="ECO:0000315"/>
    <property type="project" value="MGI"/>
</dbReference>
<dbReference type="GO" id="GO:0060441">
    <property type="term" value="P:epithelial tube branching involved in lung morphogenesis"/>
    <property type="evidence" value="ECO:0000315"/>
    <property type="project" value="MGI"/>
</dbReference>
<dbReference type="GO" id="GO:0060429">
    <property type="term" value="P:epithelium development"/>
    <property type="evidence" value="ECO:0000315"/>
    <property type="project" value="MGI"/>
</dbReference>
<dbReference type="GO" id="GO:0042596">
    <property type="term" value="P:fear response"/>
    <property type="evidence" value="ECO:0000315"/>
    <property type="project" value="MGI"/>
</dbReference>
<dbReference type="GO" id="GO:0008543">
    <property type="term" value="P:fibroblast growth factor receptor signaling pathway"/>
    <property type="evidence" value="ECO:0000314"/>
    <property type="project" value="MGI"/>
</dbReference>
<dbReference type="GO" id="GO:0042044">
    <property type="term" value="P:fluid transport"/>
    <property type="evidence" value="ECO:0000316"/>
    <property type="project" value="MGI"/>
</dbReference>
<dbReference type="GO" id="GO:0007369">
    <property type="term" value="P:gastrulation"/>
    <property type="evidence" value="ECO:0000315"/>
    <property type="project" value="MGI"/>
</dbReference>
<dbReference type="GO" id="GO:0010467">
    <property type="term" value="P:gene expression"/>
    <property type="evidence" value="ECO:0000315"/>
    <property type="project" value="MGI"/>
</dbReference>
<dbReference type="GO" id="GO:0002067">
    <property type="term" value="P:glandular epithelial cell differentiation"/>
    <property type="evidence" value="ECO:0000315"/>
    <property type="project" value="MGI"/>
</dbReference>
<dbReference type="GO" id="GO:0032836">
    <property type="term" value="P:glomerular basement membrane development"/>
    <property type="evidence" value="ECO:0000315"/>
    <property type="project" value="MGI"/>
</dbReference>
<dbReference type="GO" id="GO:0006024">
    <property type="term" value="P:glycosaminoglycan biosynthetic process"/>
    <property type="evidence" value="ECO:0007669"/>
    <property type="project" value="Ensembl"/>
</dbReference>
<dbReference type="GO" id="GO:0022405">
    <property type="term" value="P:hair cycle process"/>
    <property type="evidence" value="ECO:0000315"/>
    <property type="project" value="MGI"/>
</dbReference>
<dbReference type="GO" id="GO:0031069">
    <property type="term" value="P:hair follicle morphogenesis"/>
    <property type="evidence" value="ECO:0000315"/>
    <property type="project" value="MGI"/>
</dbReference>
<dbReference type="GO" id="GO:0060047">
    <property type="term" value="P:heart contraction"/>
    <property type="evidence" value="ECO:0000316"/>
    <property type="project" value="MGI"/>
</dbReference>
<dbReference type="GO" id="GO:0003128">
    <property type="term" value="P:heart field specification"/>
    <property type="evidence" value="ECO:0000315"/>
    <property type="project" value="MGI"/>
</dbReference>
<dbReference type="GO" id="GO:0002244">
    <property type="term" value="P:hematopoietic progenitor cell differentiation"/>
    <property type="evidence" value="ECO:0000315"/>
    <property type="project" value="MGI"/>
</dbReference>
<dbReference type="GO" id="GO:0060218">
    <property type="term" value="P:hematopoietic stem cell differentiation"/>
    <property type="evidence" value="ECO:0000315"/>
    <property type="project" value="MGI"/>
</dbReference>
<dbReference type="GO" id="GO:0061484">
    <property type="term" value="P:hematopoietic stem cell homeostasis"/>
    <property type="evidence" value="ECO:0000315"/>
    <property type="project" value="MGI"/>
</dbReference>
<dbReference type="GO" id="GO:0097241">
    <property type="term" value="P:hematopoietic stem cell migration to bone marrow"/>
    <property type="evidence" value="ECO:0000315"/>
    <property type="project" value="MGI"/>
</dbReference>
<dbReference type="GO" id="GO:0015012">
    <property type="term" value="P:heparan sulfate proteoglycan biosynthetic process"/>
    <property type="evidence" value="ECO:0000314"/>
    <property type="project" value="UniProtKB"/>
</dbReference>
<dbReference type="GO" id="GO:0030210">
    <property type="term" value="P:heparin proteoglycan biosynthetic process"/>
    <property type="evidence" value="ECO:0000315"/>
    <property type="project" value="MGI"/>
</dbReference>
<dbReference type="GO" id="GO:0030202">
    <property type="term" value="P:heparin proteoglycan metabolic process"/>
    <property type="evidence" value="ECO:0000315"/>
    <property type="project" value="MGI"/>
</dbReference>
<dbReference type="GO" id="GO:0002524">
    <property type="term" value="P:hypersensitivity"/>
    <property type="evidence" value="ECO:0000315"/>
    <property type="project" value="MGI"/>
</dbReference>
<dbReference type="GO" id="GO:0050901">
    <property type="term" value="P:leukocyte tethering or rolling"/>
    <property type="evidence" value="ECO:0000315"/>
    <property type="project" value="MGI"/>
</dbReference>
<dbReference type="GO" id="GO:0036022">
    <property type="term" value="P:limb joint morphogenesis"/>
    <property type="evidence" value="ECO:0000315"/>
    <property type="project" value="MGI"/>
</dbReference>
<dbReference type="GO" id="GO:0036339">
    <property type="term" value="P:lymphocyte adhesion to endothelial cell of high endothelial venule"/>
    <property type="evidence" value="ECO:0000315"/>
    <property type="project" value="MGI"/>
</dbReference>
<dbReference type="GO" id="GO:0097021">
    <property type="term" value="P:lymphocyte migration into lymphoid organs"/>
    <property type="evidence" value="ECO:0000315"/>
    <property type="project" value="MGI"/>
</dbReference>
<dbReference type="GO" id="GO:1901706">
    <property type="term" value="P:mesenchymal cell differentiation involved in bone development"/>
    <property type="evidence" value="ECO:0000315"/>
    <property type="project" value="MGI"/>
</dbReference>
<dbReference type="GO" id="GO:0060485">
    <property type="term" value="P:mesenchyme development"/>
    <property type="evidence" value="ECO:0000315"/>
    <property type="project" value="MGI"/>
</dbReference>
<dbReference type="GO" id="GO:0007498">
    <property type="term" value="P:mesoderm development"/>
    <property type="evidence" value="ECO:0000315"/>
    <property type="project" value="MGI"/>
</dbReference>
<dbReference type="GO" id="GO:0061744">
    <property type="term" value="P:motor behavior"/>
    <property type="evidence" value="ECO:0000315"/>
    <property type="project" value="MGI"/>
</dbReference>
<dbReference type="GO" id="GO:0035264">
    <property type="term" value="P:multicellular organism growth"/>
    <property type="evidence" value="ECO:0000315"/>
    <property type="project" value="MGI"/>
</dbReference>
<dbReference type="GO" id="GO:0050891">
    <property type="term" value="P:multicellular organismal-level water homeostasis"/>
    <property type="evidence" value="ECO:0000316"/>
    <property type="project" value="MGI"/>
</dbReference>
<dbReference type="GO" id="GO:0014033">
    <property type="term" value="P:neural crest cell differentiation"/>
    <property type="evidence" value="ECO:0000315"/>
    <property type="project" value="MGI"/>
</dbReference>
<dbReference type="GO" id="GO:0031175">
    <property type="term" value="P:neuron projection development"/>
    <property type="evidence" value="ECO:0000315"/>
    <property type="project" value="MGI"/>
</dbReference>
<dbReference type="GO" id="GO:0021772">
    <property type="term" value="P:olfactory bulb development"/>
    <property type="evidence" value="ECO:0000315"/>
    <property type="project" value="MGI"/>
</dbReference>
<dbReference type="GO" id="GO:0021554">
    <property type="term" value="P:optic nerve development"/>
    <property type="evidence" value="ECO:0000315"/>
    <property type="project" value="MGI"/>
</dbReference>
<dbReference type="GO" id="GO:0043931">
    <property type="term" value="P:ossification involved in bone maturation"/>
    <property type="evidence" value="ECO:0000315"/>
    <property type="project" value="MGI"/>
</dbReference>
<dbReference type="GO" id="GO:0061974">
    <property type="term" value="P:perichondral bone morphogenesis"/>
    <property type="evidence" value="ECO:0000315"/>
    <property type="project" value="MGI"/>
</dbReference>
<dbReference type="GO" id="GO:0072112">
    <property type="term" value="P:podocyte differentiation"/>
    <property type="evidence" value="ECO:0000315"/>
    <property type="project" value="MGI"/>
</dbReference>
<dbReference type="GO" id="GO:0000271">
    <property type="term" value="P:polysaccharide biosynthetic process"/>
    <property type="evidence" value="ECO:0007669"/>
    <property type="project" value="Ensembl"/>
</dbReference>
<dbReference type="GO" id="GO:0030163">
    <property type="term" value="P:protein catabolic process"/>
    <property type="evidence" value="ECO:0000315"/>
    <property type="project" value="MGI"/>
</dbReference>
<dbReference type="GO" id="GO:0006486">
    <property type="term" value="P:protein glycosylation"/>
    <property type="evidence" value="ECO:0007669"/>
    <property type="project" value="UniProtKB-UniPathway"/>
</dbReference>
<dbReference type="GO" id="GO:0065003">
    <property type="term" value="P:protein-containing complex assembly"/>
    <property type="evidence" value="ECO:0000315"/>
    <property type="project" value="MGI"/>
</dbReference>
<dbReference type="GO" id="GO:0030166">
    <property type="term" value="P:proteoglycan biosynthetic process"/>
    <property type="evidence" value="ECO:0000315"/>
    <property type="project" value="MGI"/>
</dbReference>
<dbReference type="GO" id="GO:0008217">
    <property type="term" value="P:regulation of blood pressure"/>
    <property type="evidence" value="ECO:0000316"/>
    <property type="project" value="MGI"/>
</dbReference>
<dbReference type="GO" id="GO:0010803">
    <property type="term" value="P:regulation of tumor necrosis factor-mediated signaling pathway"/>
    <property type="evidence" value="ECO:0000315"/>
    <property type="project" value="MGI"/>
</dbReference>
<dbReference type="GO" id="GO:0070848">
    <property type="term" value="P:response to growth factor"/>
    <property type="evidence" value="ECO:0000315"/>
    <property type="project" value="MGI"/>
</dbReference>
<dbReference type="GO" id="GO:0071503">
    <property type="term" value="P:response to heparin"/>
    <property type="evidence" value="ECO:0000315"/>
    <property type="project" value="MGI"/>
</dbReference>
<dbReference type="GO" id="GO:1990823">
    <property type="term" value="P:response to leukemia inhibitory factor"/>
    <property type="evidence" value="ECO:0000315"/>
    <property type="project" value="MGI"/>
</dbReference>
<dbReference type="GO" id="GO:0009642">
    <property type="term" value="P:response to light intensity"/>
    <property type="evidence" value="ECO:0000315"/>
    <property type="project" value="MGI"/>
</dbReference>
<dbReference type="GO" id="GO:0009615">
    <property type="term" value="P:response to virus"/>
    <property type="evidence" value="ECO:0000315"/>
    <property type="project" value="MGI"/>
</dbReference>
<dbReference type="GO" id="GO:0048733">
    <property type="term" value="P:sebaceous gland development"/>
    <property type="evidence" value="ECO:0000315"/>
    <property type="project" value="MGI"/>
</dbReference>
<dbReference type="GO" id="GO:0007224">
    <property type="term" value="P:smoothened signaling pathway"/>
    <property type="evidence" value="ECO:0000315"/>
    <property type="project" value="MGI"/>
</dbReference>
<dbReference type="GO" id="GO:0060506">
    <property type="term" value="P:smoothened signaling pathway involved in lung development"/>
    <property type="evidence" value="ECO:0000315"/>
    <property type="project" value="MGI"/>
</dbReference>
<dbReference type="GO" id="GO:0035176">
    <property type="term" value="P:social behavior"/>
    <property type="evidence" value="ECO:0000315"/>
    <property type="project" value="MGI"/>
</dbReference>
<dbReference type="GO" id="GO:0055078">
    <property type="term" value="P:sodium ion homeostasis"/>
    <property type="evidence" value="ECO:0000316"/>
    <property type="project" value="MGI"/>
</dbReference>
<dbReference type="GO" id="GO:0017145">
    <property type="term" value="P:stem cell division"/>
    <property type="evidence" value="ECO:0000315"/>
    <property type="project" value="MGI"/>
</dbReference>
<dbReference type="GO" id="GO:0062094">
    <property type="term" value="P:stomach development"/>
    <property type="evidence" value="ECO:0000315"/>
    <property type="project" value="MGI"/>
</dbReference>
<dbReference type="GO" id="GO:0051923">
    <property type="term" value="P:sulfation"/>
    <property type="evidence" value="ECO:0000314"/>
    <property type="project" value="MGI"/>
</dbReference>
<dbReference type="GO" id="GO:0060792">
    <property type="term" value="P:sweat gland development"/>
    <property type="evidence" value="ECO:0000315"/>
    <property type="project" value="MGI"/>
</dbReference>
<dbReference type="GO" id="GO:0035249">
    <property type="term" value="P:synaptic transmission, glutamatergic"/>
    <property type="evidence" value="ECO:0000315"/>
    <property type="project" value="MGI"/>
</dbReference>
<dbReference type="GO" id="GO:0120193">
    <property type="term" value="P:tight junction organization"/>
    <property type="evidence" value="ECO:0000315"/>
    <property type="project" value="MGI"/>
</dbReference>
<dbReference type="GO" id="GO:0007033">
    <property type="term" value="P:vacuole organization"/>
    <property type="evidence" value="ECO:0000315"/>
    <property type="project" value="MGI"/>
</dbReference>
<dbReference type="GO" id="GO:0042311">
    <property type="term" value="P:vasodilation"/>
    <property type="evidence" value="ECO:0000316"/>
    <property type="project" value="MGI"/>
</dbReference>
<dbReference type="GO" id="GO:0071625">
    <property type="term" value="P:vocalization behavior"/>
    <property type="evidence" value="ECO:0000315"/>
    <property type="project" value="MGI"/>
</dbReference>
<dbReference type="GO" id="GO:0042060">
    <property type="term" value="P:wound healing"/>
    <property type="evidence" value="ECO:0000315"/>
    <property type="project" value="MGI"/>
</dbReference>
<dbReference type="FunFam" id="3.90.550.10:FF:000034">
    <property type="entry name" value="Exostosin 1"/>
    <property type="match status" value="1"/>
</dbReference>
<dbReference type="Gene3D" id="3.90.550.10">
    <property type="entry name" value="Spore Coat Polysaccharide Biosynthesis Protein SpsA, Chain A"/>
    <property type="match status" value="1"/>
</dbReference>
<dbReference type="InterPro" id="IPR004263">
    <property type="entry name" value="Exostosin"/>
</dbReference>
<dbReference type="InterPro" id="IPR040911">
    <property type="entry name" value="Exostosin_GT47"/>
</dbReference>
<dbReference type="InterPro" id="IPR015338">
    <property type="entry name" value="GT64_dom"/>
</dbReference>
<dbReference type="InterPro" id="IPR029044">
    <property type="entry name" value="Nucleotide-diphossugar_trans"/>
</dbReference>
<dbReference type="PANTHER" id="PTHR48261">
    <property type="entry name" value="ACETYLGLUCOSAMINYLTRANSFERASE"/>
    <property type="match status" value="1"/>
</dbReference>
<dbReference type="PANTHER" id="PTHR48261:SF3">
    <property type="entry name" value="EXOSTOSIN GLYCOSYLTRANSFERASE 1"/>
    <property type="match status" value="1"/>
</dbReference>
<dbReference type="Pfam" id="PF03016">
    <property type="entry name" value="Exostosin_GT47"/>
    <property type="match status" value="1"/>
</dbReference>
<dbReference type="Pfam" id="PF09258">
    <property type="entry name" value="Glyco_transf_64"/>
    <property type="match status" value="1"/>
</dbReference>
<dbReference type="SUPFAM" id="SSF53448">
    <property type="entry name" value="Nucleotide-diphospho-sugar transferases"/>
    <property type="match status" value="1"/>
</dbReference>
<protein>
    <recommendedName>
        <fullName evidence="4">Exostosin-1</fullName>
        <ecNumber evidence="1">2.4.1.225</ecNumber>
    </recommendedName>
    <alternativeName>
        <fullName evidence="5">Exostosin glycosyltransferase 1</fullName>
    </alternativeName>
    <alternativeName>
        <fullName>Multiple exostoses protein 1 homolog</fullName>
    </alternativeName>
    <alternativeName>
        <fullName evidence="1">N-acetylglucosaminyl-proteoglycan 4-beta-glucuronosyltransferase</fullName>
    </alternativeName>
</protein>
<evidence type="ECO:0000250" key="1">
    <source>
        <dbReference type="UniProtKB" id="Q16394"/>
    </source>
</evidence>
<evidence type="ECO:0000255" key="2"/>
<evidence type="ECO:0000269" key="3">
    <source>
    </source>
</evidence>
<evidence type="ECO:0000305" key="4"/>
<evidence type="ECO:0000312" key="5">
    <source>
        <dbReference type="MGI" id="MGI:894663"/>
    </source>
</evidence>
<reference key="1">
    <citation type="journal article" date="1997" name="Cytogenet. Cell Genet.">
        <title>The murine Ext1 gene shows a high level of sequence similarity with its human homologue and is part of a conserved linkage group on chromosome 15.</title>
        <authorList>
            <person name="Lohmann D.R."/>
            <person name="Buiting K."/>
            <person name="Luedecke H.-J."/>
            <person name="Horsthemke B."/>
        </authorList>
    </citation>
    <scope>NUCLEOTIDE SEQUENCE [MRNA]</scope>
    <source>
        <strain>C57BL/6 X CBA</strain>
    </source>
</reference>
<reference key="2">
    <citation type="journal article" date="1997" name="DNA Seq.">
        <title>Isolation of the mouse cDNA homologous to the human EXT1 gene responsible for hereditary multiple exostoses.</title>
        <authorList>
            <person name="Lin X."/>
            <person name="Wells D."/>
        </authorList>
    </citation>
    <scope>NUCLEOTIDE SEQUENCE [MRNA]</scope>
    <source>
        <strain>C57BL/6J</strain>
        <tissue>Embryo</tissue>
    </source>
</reference>
<reference key="3">
    <citation type="journal article" date="2004" name="Genome Res.">
        <title>The status, quality, and expansion of the NIH full-length cDNA project: the Mammalian Gene Collection (MGC).</title>
        <authorList>
            <consortium name="The MGC Project Team"/>
        </authorList>
    </citation>
    <scope>NUCLEOTIDE SEQUENCE [LARGE SCALE MRNA]</scope>
    <source>
        <tissue>Mammary gland</tissue>
    </source>
</reference>
<reference key="4">
    <citation type="journal article" date="1998" name="Biochem. Biophys. Res. Commun.">
        <title>Expression and functional analysis of mouse EXT1, a homolog of the human multiple exostoses type 1 gene.</title>
        <authorList>
            <person name="Lin X."/>
            <person name="Gan L."/>
            <person name="Klein W.H."/>
            <person name="Wells D."/>
        </authorList>
    </citation>
    <scope>SUBCELLULAR LOCATION</scope>
    <scope>DEVELOPMENTAL STAGE</scope>
</reference>
<gene>
    <name evidence="5" type="primary">Ext1</name>
</gene>
<proteinExistence type="evidence at transcript level"/>
<feature type="chain" id="PRO_0000149649" description="Exostosin-1">
    <location>
        <begin position="1"/>
        <end position="746"/>
    </location>
</feature>
<feature type="topological domain" description="Cytoplasmic" evidence="2">
    <location>
        <begin position="1"/>
        <end position="7"/>
    </location>
</feature>
<feature type="transmembrane region" description="Helical; Signal-anchor for type II membrane protein" evidence="2">
    <location>
        <begin position="8"/>
        <end position="28"/>
    </location>
</feature>
<feature type="topological domain" description="Lumenal" evidence="2">
    <location>
        <begin position="29"/>
        <end position="746"/>
    </location>
</feature>
<feature type="binding site" evidence="1">
    <location>
        <position position="166"/>
    </location>
    <ligand>
        <name>a protein</name>
        <dbReference type="ChEBI" id="CHEBI:16541"/>
    </ligand>
    <ligandPart>
        <name>O(3)-(N-acetyl-alpha-D-glucosaminyl-poly[(1-&gt;4)-beta-D-glucuronosyl-(1-&gt;4)-N-acetyl-alpha-D-glucosaminyl]-(1-&gt;4)-beta-D-glucuronosyl-(1-&gt;3)-beta-D-galactosyl-(1-&gt;3)-beta-D-galactosyl-(1-&gt;4)-beta-D-xylosyl)-L-serine residue</name>
        <dbReference type="ChEBI" id="CHEBI:132416"/>
    </ligandPart>
</feature>
<feature type="binding site" evidence="1">
    <location>
        <position position="203"/>
    </location>
    <ligand>
        <name>a protein</name>
        <dbReference type="ChEBI" id="CHEBI:16541"/>
    </ligand>
    <ligandPart>
        <name>O(3)-(N-acetyl-alpha-D-glucosaminyl-poly[(1-&gt;4)-beta-D-glucuronosyl-(1-&gt;4)-N-acetyl-alpha-D-glucosaminyl]-(1-&gt;4)-beta-D-glucuronosyl-(1-&gt;3)-beta-D-galactosyl-(1-&gt;3)-beta-D-galactosyl-(1-&gt;4)-beta-D-xylosyl)-L-serine residue</name>
        <dbReference type="ChEBI" id="CHEBI:132416"/>
    </ligandPart>
</feature>
<feature type="binding site" evidence="1">
    <location>
        <position position="267"/>
    </location>
    <ligand>
        <name>UDP</name>
        <dbReference type="ChEBI" id="CHEBI:58223"/>
    </ligand>
</feature>
<feature type="binding site" evidence="1">
    <location>
        <position position="269"/>
    </location>
    <ligand>
        <name>UDP</name>
        <dbReference type="ChEBI" id="CHEBI:58223"/>
    </ligand>
</feature>
<feature type="binding site" evidence="1">
    <location>
        <position position="271"/>
    </location>
    <ligand>
        <name>UDP</name>
        <dbReference type="ChEBI" id="CHEBI:58223"/>
    </ligand>
</feature>
<feature type="binding site" evidence="1">
    <location>
        <position position="280"/>
    </location>
    <ligand>
        <name>UDP</name>
        <dbReference type="ChEBI" id="CHEBI:58223"/>
    </ligand>
</feature>
<feature type="binding site" evidence="1">
    <location>
        <position position="300"/>
    </location>
    <ligand>
        <name>a protein</name>
        <dbReference type="ChEBI" id="CHEBI:16541"/>
    </ligand>
    <ligandPart>
        <name>O(3)-(N-acetyl-alpha-D-glucosaminyl-poly[(1-&gt;4)-beta-D-glucuronosyl-(1-&gt;4)-N-acetyl-alpha-D-glucosaminyl]-(1-&gt;4)-beta-D-glucuronosyl-(1-&gt;3)-beta-D-galactosyl-(1-&gt;3)-beta-D-galactosyl-(1-&gt;4)-beta-D-xylosyl)-L-serine residue</name>
        <dbReference type="ChEBI" id="CHEBI:132416"/>
    </ligandPart>
</feature>
<feature type="binding site" evidence="1">
    <location>
        <position position="319"/>
    </location>
    <ligand>
        <name>UDP</name>
        <dbReference type="ChEBI" id="CHEBI:58223"/>
    </ligand>
</feature>
<feature type="binding site" evidence="1">
    <location>
        <position position="324"/>
    </location>
    <ligand>
        <name>UDP</name>
        <dbReference type="ChEBI" id="CHEBI:58223"/>
    </ligand>
</feature>
<feature type="binding site" evidence="1">
    <location>
        <position position="346"/>
    </location>
    <ligand>
        <name>UDP</name>
        <dbReference type="ChEBI" id="CHEBI:58223"/>
    </ligand>
</feature>
<feature type="binding site" evidence="1">
    <location>
        <position position="349"/>
    </location>
    <ligand>
        <name>UDP</name>
        <dbReference type="ChEBI" id="CHEBI:58223"/>
    </ligand>
</feature>
<feature type="glycosylation site" description="N-linked (GlcNAc...) asparagine" evidence="2">
    <location>
        <position position="89"/>
    </location>
</feature>
<feature type="glycosylation site" description="N-linked (GlcNAc...) asparagine" evidence="1">
    <location>
        <position position="330"/>
    </location>
</feature>
<feature type="disulfide bond" evidence="1">
    <location>
        <begin position="98"/>
        <end position="103"/>
    </location>
</feature>
<feature type="disulfide bond" evidence="1">
    <location>
        <begin position="109"/>
        <end position="152"/>
    </location>
</feature>
<feature type="disulfide bond" evidence="1">
    <location>
        <begin position="298"/>
        <end position="312"/>
    </location>
</feature>
<feature type="disulfide bond" evidence="1">
    <location>
        <begin position="334"/>
        <end position="355"/>
    </location>
</feature>
<feature type="disulfide bond" evidence="1">
    <location>
        <begin position="652"/>
        <end position="704"/>
    </location>
</feature>
<feature type="sequence conflict" description="In Ref. 2; CAA65443." evidence="4" ref="2">
    <original>C</original>
    <variation>S</variation>
    <location>
        <position position="16"/>
    </location>
</feature>
<feature type="sequence conflict" description="In Ref. 2; CAA65443." evidence="4" ref="2">
    <original>DA</original>
    <variation>EP</variation>
    <location>
        <begin position="60"/>
        <end position="61"/>
    </location>
</feature>
<feature type="sequence conflict" description="In Ref. 2; CAA65443." evidence="4" ref="2">
    <original>S</original>
    <variation>T</variation>
    <location>
        <position position="220"/>
    </location>
</feature>
<feature type="sequence conflict" description="In Ref. 2; CAA65443." evidence="4" ref="2">
    <original>A</original>
    <variation>P</variation>
    <location>
        <position position="486"/>
    </location>
</feature>
<feature type="sequence conflict" description="In Ref. 2; CAA65443." evidence="4" ref="2">
    <location>
        <position position="548"/>
    </location>
</feature>
<name>EXT1_MOUSE</name>
<organism>
    <name type="scientific">Mus musculus</name>
    <name type="common">Mouse</name>
    <dbReference type="NCBI Taxonomy" id="10090"/>
    <lineage>
        <taxon>Eukaryota</taxon>
        <taxon>Metazoa</taxon>
        <taxon>Chordata</taxon>
        <taxon>Craniata</taxon>
        <taxon>Vertebrata</taxon>
        <taxon>Euteleostomi</taxon>
        <taxon>Mammalia</taxon>
        <taxon>Eutheria</taxon>
        <taxon>Euarchontoglires</taxon>
        <taxon>Glires</taxon>
        <taxon>Rodentia</taxon>
        <taxon>Myomorpha</taxon>
        <taxon>Muroidea</taxon>
        <taxon>Muridae</taxon>
        <taxon>Murinae</taxon>
        <taxon>Mus</taxon>
        <taxon>Mus</taxon>
    </lineage>
</organism>
<comment type="function">
    <text evidence="1">Glycosyltransferase forming with EXT2 the heterodimeric heparan sulfate polymerase which catalyzes the elongation of the heparan sulfate glycan backbone. Glycan backbone extension consists in the alternating transfer of (1-&gt;4)-beta-D-GlcA and (1-&gt;4)-alpha-D-GlcNAc residues from their respective UDP-sugar donors. Both EXT1 and EXT2 are required for the full activity of the polymerase since EXT1 bears the N-acetylglucosaminyl-proteoglycan 4-beta-glucuronosyltransferase activity within the complex while EXT2 carries the glucuronosyl-N-acetylglucosaminyl-proteoglycan 4-alpha-N-acetylglucosaminyltransferase activity. Heparan sulfate proteoglycans are ubiquitous components of the extracellular matrix and play an important role in tissue homeostasis and signaling.</text>
</comment>
<comment type="catalytic activity">
    <reaction evidence="1">
        <text>3-O-{alpha-D-GlcNAc-[(1-&gt;4)-beta-D-GlcA-(1-&gt;4)-alpha-D-GlcNAc](n)-(1-&gt;4)-beta-D-GlcA-(1-&gt;3)-beta-D-Gal-(1-&gt;3)-beta-D-Gal-(1-&gt;4)-beta-D-Xyl}-L-seryl-[protein] + UDP-alpha-D-glucuronate = 3-O-{[(1-&gt;4)-beta-D-GlcA-(1-&gt;4)-alpha-D-GlcNAc](n+1)-(1-&gt;4)-beta-D-GlcA-(1-&gt;3)-beta-D-Gal-(1-&gt;3)-beta-D-Gal-(1-&gt;4)-beta-D-Xyl}-L-seryl-[protein] + UDP + H(+)</text>
        <dbReference type="Rhea" id="RHEA:20908"/>
        <dbReference type="Rhea" id="RHEA-COMP:12623"/>
        <dbReference type="Rhea" id="RHEA-COMP:14295"/>
        <dbReference type="ChEBI" id="CHEBI:15378"/>
        <dbReference type="ChEBI" id="CHEBI:58052"/>
        <dbReference type="ChEBI" id="CHEBI:58223"/>
        <dbReference type="ChEBI" id="CHEBI:132415"/>
        <dbReference type="ChEBI" id="CHEBI:132416"/>
        <dbReference type="EC" id="2.4.1.225"/>
    </reaction>
    <physiologicalReaction direction="left-to-right" evidence="1">
        <dbReference type="Rhea" id="RHEA:20909"/>
    </physiologicalReaction>
</comment>
<comment type="pathway">
    <text evidence="1">Protein modification; protein glycosylation.</text>
</comment>
<comment type="subunit">
    <text evidence="1">Part of the heparan sulfate polymerase, a dimeric complex composed of EXT1 and EXT2. Could also form homooligomeric complexes. Interacts with NDST1.</text>
</comment>
<comment type="subcellular location">
    <subcellularLocation>
        <location evidence="1">Golgi apparatus membrane</location>
        <topology evidence="2">Single-pass type II membrane protein</topology>
    </subcellularLocation>
    <subcellularLocation>
        <location evidence="1">Golgi apparatus</location>
        <location evidence="1">cis-Golgi network membrane</location>
        <topology evidence="2">Single-pass type II membrane protein</topology>
    </subcellularLocation>
    <subcellularLocation>
        <location evidence="3">Endoplasmic reticulum membrane</location>
        <topology evidence="2">Single-pass type II membrane protein</topology>
    </subcellularLocation>
    <text evidence="1">The active heparan sulfate polymerase complex composed of EXT1 and EXT2 is localized to the Golgi apparatus. If both proteins are individually detected in the endoplasmic reticulum, the formation of the complex promotes their transport to the Golgi.</text>
</comment>
<comment type="developmental stage">
    <text evidence="3">Initially expressed at 6.5 dpc, which coincides with gastrulation of the embryo. High level of expression in developing limb buds at 10.5 to 12.5 dpc.</text>
</comment>
<comment type="PTM">
    <text evidence="1">N-glycosylated.</text>
</comment>
<comment type="similarity">
    <text evidence="4">Belongs to the glycosyltransferase 47 family.</text>
</comment>